<keyword id="KW-1072">Activation of host autophagy by virus</keyword>
<keyword id="KW-0106">Calcium</keyword>
<keyword id="KW-0260">Enterotoxin</keyword>
<keyword id="KW-0325">Glycoprotein</keyword>
<keyword id="KW-1038">Host endoplasmic reticulum</keyword>
<keyword id="KW-1043">Host membrane</keyword>
<keyword id="KW-0945">Host-virus interaction</keyword>
<keyword id="KW-0407">Ion channel</keyword>
<keyword id="KW-0406">Ion transport</keyword>
<keyword id="KW-0472">Membrane</keyword>
<keyword id="KW-0479">Metal-binding</keyword>
<keyword id="KW-0964">Secreted</keyword>
<keyword id="KW-0735">Signal-anchor</keyword>
<keyword id="KW-0800">Toxin</keyword>
<keyword id="KW-0812">Transmembrane</keyword>
<keyword id="KW-1133">Transmembrane helix</keyword>
<keyword id="KW-0813">Transport</keyword>
<keyword id="KW-1182">Viral ion channel</keyword>
<keyword id="KW-0843">Virulence</keyword>
<dbReference type="EMBL" id="EF672582">
    <property type="protein sequence ID" value="ABV53257.1"/>
    <property type="molecule type" value="Genomic_RNA"/>
</dbReference>
<dbReference type="SMR" id="B3SRT2"/>
<dbReference type="Proteomes" id="UP000001457">
    <property type="component" value="Genome"/>
</dbReference>
<dbReference type="GO" id="GO:0005576">
    <property type="term" value="C:extracellular region"/>
    <property type="evidence" value="ECO:0007669"/>
    <property type="project" value="UniProtKB-SubCell"/>
</dbReference>
<dbReference type="GO" id="GO:0044155">
    <property type="term" value="C:host caveola"/>
    <property type="evidence" value="ECO:0007669"/>
    <property type="project" value="UniProtKB-SubCell"/>
</dbReference>
<dbReference type="GO" id="GO:0044169">
    <property type="term" value="C:host cell rough endoplasmic reticulum membrane"/>
    <property type="evidence" value="ECO:0007669"/>
    <property type="project" value="UniProtKB-SubCell"/>
</dbReference>
<dbReference type="GO" id="GO:0016020">
    <property type="term" value="C:membrane"/>
    <property type="evidence" value="ECO:0007669"/>
    <property type="project" value="UniProtKB-UniRule"/>
</dbReference>
<dbReference type="GO" id="GO:0015267">
    <property type="term" value="F:channel activity"/>
    <property type="evidence" value="ECO:0007669"/>
    <property type="project" value="UniProtKB-KW"/>
</dbReference>
<dbReference type="GO" id="GO:0046872">
    <property type="term" value="F:metal ion binding"/>
    <property type="evidence" value="ECO:0007669"/>
    <property type="project" value="UniProtKB-UniRule"/>
</dbReference>
<dbReference type="GO" id="GO:0090729">
    <property type="term" value="F:toxin activity"/>
    <property type="evidence" value="ECO:0007669"/>
    <property type="project" value="UniProtKB-UniRule"/>
</dbReference>
<dbReference type="GO" id="GO:0034220">
    <property type="term" value="P:monoatomic ion transmembrane transport"/>
    <property type="evidence" value="ECO:0007669"/>
    <property type="project" value="UniProtKB-KW"/>
</dbReference>
<dbReference type="GO" id="GO:0039520">
    <property type="term" value="P:symbiont-mediated activation of host autophagy"/>
    <property type="evidence" value="ECO:0007669"/>
    <property type="project" value="UniProtKB-KW"/>
</dbReference>
<dbReference type="GO" id="GO:0016032">
    <property type="term" value="P:viral process"/>
    <property type="evidence" value="ECO:0007669"/>
    <property type="project" value="UniProtKB-UniRule"/>
</dbReference>
<dbReference type="FunFam" id="1.20.5.430:FF:000005">
    <property type="entry name" value="Non-structural glycoprotein 4"/>
    <property type="match status" value="1"/>
</dbReference>
<dbReference type="Gene3D" id="1.20.5.430">
    <property type="match status" value="1"/>
</dbReference>
<dbReference type="HAMAP" id="MF_04091">
    <property type="entry name" value="ROTA_NSP4"/>
    <property type="match status" value="1"/>
</dbReference>
<dbReference type="InterPro" id="IPR002107">
    <property type="entry name" value="Rotavirus_NSP4"/>
</dbReference>
<dbReference type="Pfam" id="PF01452">
    <property type="entry name" value="Rota_NSP4"/>
    <property type="match status" value="1"/>
</dbReference>
<dbReference type="SUPFAM" id="SSF58030">
    <property type="entry name" value="Rotavirus nonstructural proteins"/>
    <property type="match status" value="1"/>
</dbReference>
<protein>
    <recommendedName>
        <fullName evidence="1">Non-structural glycoprotein 4</fullName>
        <shortName evidence="1">NSP4</shortName>
    </recommendedName>
    <alternativeName>
        <fullName evidence="1">NCVP5</fullName>
    </alternativeName>
    <alternativeName>
        <fullName evidence="1">NS28</fullName>
    </alternativeName>
</protein>
<evidence type="ECO:0000255" key="1">
    <source>
        <dbReference type="HAMAP-Rule" id="MF_04091"/>
    </source>
</evidence>
<accession>B3SRT2</accession>
<reference key="1">
    <citation type="journal article" date="2008" name="J. Virol.">
        <title>Group A human rotavirus genomics: evidence that gene constellations are influenced by viral protein interactions.</title>
        <authorList>
            <person name="Heiman E.M."/>
            <person name="McDonald S.M."/>
            <person name="Barro M."/>
            <person name="Taraporewala Z.F."/>
            <person name="Bar-Magen T."/>
            <person name="Patton J.T."/>
        </authorList>
    </citation>
    <scope>NUCLEOTIDE SEQUENCE [GENOMIC RNA]</scope>
</reference>
<sequence length="175" mass="20433">MEKLTDLNYTLSVITLMNNTLHTILEDPGMAYFPYIASVLTVLFALHKASIPTMKIALKTSKCSYKVVKYCIVTIFNTLLKLAGYKEQITTKDEIEKQMDRVVKEMRRQLEMIDKLTTREIEQVELLKRIYDKLMVRSTDEIDMTKEINQKNVRTLEEWENGKNPYEPKEVTAAM</sequence>
<comment type="function">
    <text evidence="1">Plays an essential role in the virus replication cycle by acting as a viroporin. Creates a pore in the host endoplasmic reticulum and as a consequence releases Ca(2+) in the cytoplasm of infected cell. In turn, high levels of cytoplasmic calcium trigger membrane trafficking and transport of viral ER-associated proteins to viroplasms, sites of viral genome replication and immature particle assembly.</text>
</comment>
<comment type="function">
    <text evidence="1">The secreted form acts as an enterotoxin that causes phospholipase C-dependent elevation of the intracellular calcium concentration in host intestinal mucosa cells. Increased concentration of intracellular calcium disrupts the cytoskeleton and the tight junctions, raising the paracellular permeability. Potentiates chloride ion secretion through a calcium ion-dependent signaling pathway, inducing age-dependent diarrhea. To perform this enterotoxigenic role in vivo, NSP4 is released from infected enterocytes in a soluble form capable of diffusing within the intestinal lumen and interacting with host plasma membrane receptors on neighboring epithelial cells such as integrins ITGA1/ITGB1 and ITGA2/ITGB1.</text>
</comment>
<comment type="subunit">
    <text evidence="1">Homotetramer. Interacts with the immature particle in the viroplasm. Interacts with host CAV1, early and late in infection. Interacts with host integrin ITGA1/ITGB1 heterodimer. Interacts with host integrin ITGA2/ITGB1 heterodimer. Interaction with microtubules blocks trafficking to the Golgi apparatus.</text>
</comment>
<comment type="subcellular location">
    <subcellularLocation>
        <location evidence="1">Host rough endoplasmic reticulum membrane</location>
        <topology evidence="1">Single-pass type III membrane protein</topology>
    </subcellularLocation>
    <subcellularLocation>
        <location evidence="1">Host membrane</location>
        <location evidence="1">Host caveola</location>
        <topology evidence="1">Single-pass type III membrane protein</topology>
    </subcellularLocation>
    <subcellularLocation>
        <location evidence="1">Secreted</location>
    </subcellularLocation>
    <text evidence="1">NSP4 also localizes in vesicular structures which contain autophagosomal markers and associate with viroplasms in virus-infected cells. Additionally, a soluble form of glycosylated NSP4 is secreted despite retention of its transmembrane domain.</text>
</comment>
<comment type="domain">
    <text evidence="1">Binds 1 calcium ion per tetramer.</text>
</comment>
<comment type="PTM">
    <text evidence="1">The N-glycosyl content is primarily Man(9)GlcNAc, with a small amount of Man(8)GlcNAc.</text>
</comment>
<comment type="similarity">
    <text evidence="1">Belongs to the rotavirus NSP4 family.</text>
</comment>
<organism>
    <name type="scientific">Rotavirus A (strain RVA/Human/United States/DS-1/1976/G2P1B[4])</name>
    <name type="common">RV-A</name>
    <name type="synonym">Rotavirus A (strain DS1)</name>
    <dbReference type="NCBI Taxonomy" id="10950"/>
    <lineage>
        <taxon>Viruses</taxon>
        <taxon>Riboviria</taxon>
        <taxon>Orthornavirae</taxon>
        <taxon>Duplornaviricota</taxon>
        <taxon>Resentoviricetes</taxon>
        <taxon>Reovirales</taxon>
        <taxon>Sedoreoviridae</taxon>
        <taxon>Rotavirus</taxon>
        <taxon>Rotavirus A</taxon>
    </lineage>
</organism>
<name>NSP4_ROTHD</name>
<feature type="chain" id="PRO_0000369488" description="Non-structural glycoprotein 4">
    <location>
        <begin position="1"/>
        <end position="175"/>
    </location>
</feature>
<feature type="topological domain" description="Lumenal" evidence="1">
    <location>
        <begin position="1"/>
        <end position="28"/>
    </location>
</feature>
<feature type="transmembrane region" description="Helical; Signal-anchor for type III membrane protein" evidence="1">
    <location>
        <begin position="29"/>
        <end position="51"/>
    </location>
</feature>
<feature type="topological domain" description="Cytoplasmic" evidence="1">
    <location>
        <begin position="52"/>
        <end position="175"/>
    </location>
</feature>
<feature type="binding site" evidence="1">
    <location>
        <position position="120"/>
    </location>
    <ligand>
        <name>Ca(2+)</name>
        <dbReference type="ChEBI" id="CHEBI:29108"/>
    </ligand>
</feature>
<feature type="binding site" evidence="1">
    <location>
        <position position="123"/>
    </location>
    <ligand>
        <name>Ca(2+)</name>
        <dbReference type="ChEBI" id="CHEBI:29108"/>
    </ligand>
</feature>
<feature type="glycosylation site" description="N-linked (GlcNAc...) asparagine; by host" evidence="1">
    <location>
        <position position="8"/>
    </location>
</feature>
<feature type="glycosylation site" description="N-linked (GlcNAc...) asparagine; by host" evidence="1">
    <location>
        <position position="18"/>
    </location>
</feature>
<organismHost>
    <name type="scientific">Homo sapiens</name>
    <name type="common">Human</name>
    <dbReference type="NCBI Taxonomy" id="9606"/>
</organismHost>
<proteinExistence type="inferred from homology"/>